<name>TPIS_ECO8A</name>
<sequence length="255" mass="26972">MRHPLVMGNWKLNGSRHMVHELVSNLRKELAGVAGCAVAIAPPEMYIDMAKREAEGSHIMLGAQNVDLNLSGAFTGETSAAMLKDIGAQYIIIGHSERRTYHKESDELIAKKFAVLKEQGLTPVLCIGETEAENEAGKTEEVCARQIDAVLKTQGAAAFEGAVIAYEPVWAIGTGKSATPAQAQAVHKFIRDHIAKVDANIAEQVIIQYGGSVNASNAAELFAQPDIDGALVGGASLKADAFAVIVKAAEAAKQA</sequence>
<gene>
    <name evidence="1" type="primary">tpiA</name>
    <name type="ordered locus">ECIAI1_4124</name>
</gene>
<feature type="chain" id="PRO_1000196984" description="Triosephosphate isomerase">
    <location>
        <begin position="1"/>
        <end position="255"/>
    </location>
</feature>
<feature type="active site" description="Electrophile" evidence="1">
    <location>
        <position position="95"/>
    </location>
</feature>
<feature type="active site" description="Proton acceptor" evidence="1">
    <location>
        <position position="167"/>
    </location>
</feature>
<feature type="binding site" evidence="1">
    <location>
        <begin position="9"/>
        <end position="11"/>
    </location>
    <ligand>
        <name>substrate</name>
    </ligand>
</feature>
<feature type="binding site" evidence="1">
    <location>
        <position position="173"/>
    </location>
    <ligand>
        <name>substrate</name>
    </ligand>
</feature>
<feature type="binding site" evidence="1">
    <location>
        <position position="212"/>
    </location>
    <ligand>
        <name>substrate</name>
    </ligand>
</feature>
<feature type="binding site" evidence="1">
    <location>
        <begin position="233"/>
        <end position="234"/>
    </location>
    <ligand>
        <name>substrate</name>
    </ligand>
</feature>
<evidence type="ECO:0000255" key="1">
    <source>
        <dbReference type="HAMAP-Rule" id="MF_00147"/>
    </source>
</evidence>
<proteinExistence type="inferred from homology"/>
<keyword id="KW-0963">Cytoplasm</keyword>
<keyword id="KW-0312">Gluconeogenesis</keyword>
<keyword id="KW-0324">Glycolysis</keyword>
<keyword id="KW-0413">Isomerase</keyword>
<comment type="function">
    <text evidence="1">Involved in the gluconeogenesis. Catalyzes stereospecifically the conversion of dihydroxyacetone phosphate (DHAP) to D-glyceraldehyde-3-phosphate (G3P).</text>
</comment>
<comment type="catalytic activity">
    <reaction evidence="1">
        <text>D-glyceraldehyde 3-phosphate = dihydroxyacetone phosphate</text>
        <dbReference type="Rhea" id="RHEA:18585"/>
        <dbReference type="ChEBI" id="CHEBI:57642"/>
        <dbReference type="ChEBI" id="CHEBI:59776"/>
        <dbReference type="EC" id="5.3.1.1"/>
    </reaction>
</comment>
<comment type="pathway">
    <text evidence="1">Carbohydrate biosynthesis; gluconeogenesis.</text>
</comment>
<comment type="pathway">
    <text evidence="1">Carbohydrate degradation; glycolysis; D-glyceraldehyde 3-phosphate from glycerone phosphate: step 1/1.</text>
</comment>
<comment type="subunit">
    <text evidence="1">Homodimer.</text>
</comment>
<comment type="subcellular location">
    <subcellularLocation>
        <location evidence="1">Cytoplasm</location>
    </subcellularLocation>
</comment>
<comment type="similarity">
    <text evidence="1">Belongs to the triosephosphate isomerase family.</text>
</comment>
<accession>B7M6X0</accession>
<organism>
    <name type="scientific">Escherichia coli O8 (strain IAI1)</name>
    <dbReference type="NCBI Taxonomy" id="585034"/>
    <lineage>
        <taxon>Bacteria</taxon>
        <taxon>Pseudomonadati</taxon>
        <taxon>Pseudomonadota</taxon>
        <taxon>Gammaproteobacteria</taxon>
        <taxon>Enterobacterales</taxon>
        <taxon>Enterobacteriaceae</taxon>
        <taxon>Escherichia</taxon>
    </lineage>
</organism>
<reference key="1">
    <citation type="journal article" date="2009" name="PLoS Genet.">
        <title>Organised genome dynamics in the Escherichia coli species results in highly diverse adaptive paths.</title>
        <authorList>
            <person name="Touchon M."/>
            <person name="Hoede C."/>
            <person name="Tenaillon O."/>
            <person name="Barbe V."/>
            <person name="Baeriswyl S."/>
            <person name="Bidet P."/>
            <person name="Bingen E."/>
            <person name="Bonacorsi S."/>
            <person name="Bouchier C."/>
            <person name="Bouvet O."/>
            <person name="Calteau A."/>
            <person name="Chiapello H."/>
            <person name="Clermont O."/>
            <person name="Cruveiller S."/>
            <person name="Danchin A."/>
            <person name="Diard M."/>
            <person name="Dossat C."/>
            <person name="Karoui M.E."/>
            <person name="Frapy E."/>
            <person name="Garry L."/>
            <person name="Ghigo J.M."/>
            <person name="Gilles A.M."/>
            <person name="Johnson J."/>
            <person name="Le Bouguenec C."/>
            <person name="Lescat M."/>
            <person name="Mangenot S."/>
            <person name="Martinez-Jehanne V."/>
            <person name="Matic I."/>
            <person name="Nassif X."/>
            <person name="Oztas S."/>
            <person name="Petit M.A."/>
            <person name="Pichon C."/>
            <person name="Rouy Z."/>
            <person name="Ruf C.S."/>
            <person name="Schneider D."/>
            <person name="Tourret J."/>
            <person name="Vacherie B."/>
            <person name="Vallenet D."/>
            <person name="Medigue C."/>
            <person name="Rocha E.P.C."/>
            <person name="Denamur E."/>
        </authorList>
    </citation>
    <scope>NUCLEOTIDE SEQUENCE [LARGE SCALE GENOMIC DNA]</scope>
    <source>
        <strain>IAI1</strain>
    </source>
</reference>
<protein>
    <recommendedName>
        <fullName evidence="1">Triosephosphate isomerase</fullName>
        <shortName evidence="1">TIM</shortName>
        <shortName evidence="1">TPI</shortName>
        <ecNumber evidence="1">5.3.1.1</ecNumber>
    </recommendedName>
    <alternativeName>
        <fullName evidence="1">Triose-phosphate isomerase</fullName>
    </alternativeName>
</protein>
<dbReference type="EC" id="5.3.1.1" evidence="1"/>
<dbReference type="EMBL" id="CU928160">
    <property type="protein sequence ID" value="CAR00895.1"/>
    <property type="molecule type" value="Genomic_DNA"/>
</dbReference>
<dbReference type="RefSeq" id="WP_001216325.1">
    <property type="nucleotide sequence ID" value="NC_011741.1"/>
</dbReference>
<dbReference type="SMR" id="B7M6X0"/>
<dbReference type="GeneID" id="93777979"/>
<dbReference type="KEGG" id="ecr:ECIAI1_4124"/>
<dbReference type="HOGENOM" id="CLU_024251_2_1_6"/>
<dbReference type="UniPathway" id="UPA00109">
    <property type="reaction ID" value="UER00189"/>
</dbReference>
<dbReference type="UniPathway" id="UPA00138"/>
<dbReference type="GO" id="GO:0005829">
    <property type="term" value="C:cytosol"/>
    <property type="evidence" value="ECO:0007669"/>
    <property type="project" value="TreeGrafter"/>
</dbReference>
<dbReference type="GO" id="GO:0004807">
    <property type="term" value="F:triose-phosphate isomerase activity"/>
    <property type="evidence" value="ECO:0007669"/>
    <property type="project" value="UniProtKB-UniRule"/>
</dbReference>
<dbReference type="GO" id="GO:0006094">
    <property type="term" value="P:gluconeogenesis"/>
    <property type="evidence" value="ECO:0007669"/>
    <property type="project" value="UniProtKB-UniRule"/>
</dbReference>
<dbReference type="GO" id="GO:0046166">
    <property type="term" value="P:glyceraldehyde-3-phosphate biosynthetic process"/>
    <property type="evidence" value="ECO:0007669"/>
    <property type="project" value="TreeGrafter"/>
</dbReference>
<dbReference type="GO" id="GO:0019563">
    <property type="term" value="P:glycerol catabolic process"/>
    <property type="evidence" value="ECO:0007669"/>
    <property type="project" value="TreeGrafter"/>
</dbReference>
<dbReference type="GO" id="GO:0006096">
    <property type="term" value="P:glycolytic process"/>
    <property type="evidence" value="ECO:0007669"/>
    <property type="project" value="UniProtKB-UniRule"/>
</dbReference>
<dbReference type="CDD" id="cd00311">
    <property type="entry name" value="TIM"/>
    <property type="match status" value="1"/>
</dbReference>
<dbReference type="FunFam" id="3.20.20.70:FF:000020">
    <property type="entry name" value="Triosephosphate isomerase"/>
    <property type="match status" value="1"/>
</dbReference>
<dbReference type="Gene3D" id="3.20.20.70">
    <property type="entry name" value="Aldolase class I"/>
    <property type="match status" value="1"/>
</dbReference>
<dbReference type="HAMAP" id="MF_00147_B">
    <property type="entry name" value="TIM_B"/>
    <property type="match status" value="1"/>
</dbReference>
<dbReference type="InterPro" id="IPR013785">
    <property type="entry name" value="Aldolase_TIM"/>
</dbReference>
<dbReference type="InterPro" id="IPR035990">
    <property type="entry name" value="TIM_sf"/>
</dbReference>
<dbReference type="InterPro" id="IPR022896">
    <property type="entry name" value="TrioseP_Isoase_bac/euk"/>
</dbReference>
<dbReference type="InterPro" id="IPR000652">
    <property type="entry name" value="Triosephosphate_isomerase"/>
</dbReference>
<dbReference type="InterPro" id="IPR020861">
    <property type="entry name" value="Triosephosphate_isomerase_AS"/>
</dbReference>
<dbReference type="NCBIfam" id="TIGR00419">
    <property type="entry name" value="tim"/>
    <property type="match status" value="1"/>
</dbReference>
<dbReference type="PANTHER" id="PTHR21139">
    <property type="entry name" value="TRIOSEPHOSPHATE ISOMERASE"/>
    <property type="match status" value="1"/>
</dbReference>
<dbReference type="PANTHER" id="PTHR21139:SF42">
    <property type="entry name" value="TRIOSEPHOSPHATE ISOMERASE"/>
    <property type="match status" value="1"/>
</dbReference>
<dbReference type="Pfam" id="PF00121">
    <property type="entry name" value="TIM"/>
    <property type="match status" value="1"/>
</dbReference>
<dbReference type="SUPFAM" id="SSF51351">
    <property type="entry name" value="Triosephosphate isomerase (TIM)"/>
    <property type="match status" value="1"/>
</dbReference>
<dbReference type="PROSITE" id="PS00171">
    <property type="entry name" value="TIM_1"/>
    <property type="match status" value="1"/>
</dbReference>
<dbReference type="PROSITE" id="PS51440">
    <property type="entry name" value="TIM_2"/>
    <property type="match status" value="1"/>
</dbReference>